<keyword id="KW-0903">Direct protein sequencing</keyword>
<keyword id="KW-0382">Hypotensive agent</keyword>
<keyword id="KW-0481">Metalloenzyme inhibitor</keyword>
<keyword id="KW-0483">Metalloprotease inhibitor</keyword>
<keyword id="KW-0646">Protease inhibitor</keyword>
<keyword id="KW-0873">Pyrrolidone carboxylic acid</keyword>
<keyword id="KW-0964">Secreted</keyword>
<keyword id="KW-0800">Toxin</keyword>
<name>BPPCB_BOTJA</name>
<sequence length="12" mass="1297">QLGPPPRPQIPP</sequence>
<evidence type="ECO:0000250" key="1"/>
<evidence type="ECO:0000269" key="2">
    <source>
    </source>
</evidence>
<evidence type="ECO:0000305" key="3"/>
<comment type="function">
    <text evidence="1">Bradykinin-potentiating peptides both inhibits the activity of the angiotensin-converting enzyme (ACE) and enhances the action of bradykinin by inhibiting the peptidases that inactivate it. It acts as an indirect hypotensive agent (By similarity).</text>
</comment>
<comment type="subcellular location">
    <subcellularLocation>
        <location>Secreted</location>
    </subcellularLocation>
</comment>
<comment type="tissue specificity">
    <text>Expressed by the venom gland.</text>
</comment>
<comment type="developmental stage">
    <text evidence="2">This protein seems to be found in adult B.jararaca venom but not in newborn snake venom.</text>
</comment>
<comment type="similarity">
    <text evidence="3">Belongs to the bradykinin-potentiating peptide family.</text>
</comment>
<reference key="1">
    <citation type="journal article" date="2010" name="J. Proteome Res.">
        <title>Analysis of the ontogenetic variation in the venom proteome/peptidome of Bothrops jararaca reveals different strategies to deal with prey.</title>
        <authorList>
            <person name="Zelanis A."/>
            <person name="Tashima A.K."/>
            <person name="Rocha M.M."/>
            <person name="Furtado M.F."/>
            <person name="Camargo A.C."/>
            <person name="Ho P.L."/>
            <person name="Serrano S.M."/>
        </authorList>
    </citation>
    <scope>PROTEIN SEQUENCE</scope>
    <scope>IDENTIFICATION BY MASS SPECTROMETRY</scope>
    <scope>PYROGLUTAMATE FORMATION AT GLN-1</scope>
    <scope>DEVELOPMENTAL STAGE</scope>
    <source>
        <tissue>Venom</tissue>
    </source>
</reference>
<feature type="peptide" id="PRO_0000423035" description="Bradykinin-potentiating peptide 12b">
    <location>
        <begin position="1"/>
        <end position="12"/>
    </location>
</feature>
<feature type="modified residue" description="Pyrrolidone carboxylic acid" evidence="2">
    <location>
        <position position="1"/>
    </location>
</feature>
<dbReference type="GO" id="GO:0005576">
    <property type="term" value="C:extracellular region"/>
    <property type="evidence" value="ECO:0007669"/>
    <property type="project" value="UniProtKB-SubCell"/>
</dbReference>
<dbReference type="GO" id="GO:0030414">
    <property type="term" value="F:peptidase inhibitor activity"/>
    <property type="evidence" value="ECO:0007669"/>
    <property type="project" value="UniProtKB-KW"/>
</dbReference>
<dbReference type="GO" id="GO:0090729">
    <property type="term" value="F:toxin activity"/>
    <property type="evidence" value="ECO:0007669"/>
    <property type="project" value="UniProtKB-KW"/>
</dbReference>
<dbReference type="GO" id="GO:0008217">
    <property type="term" value="P:regulation of blood pressure"/>
    <property type="evidence" value="ECO:0007669"/>
    <property type="project" value="UniProtKB-KW"/>
</dbReference>
<proteinExistence type="evidence at protein level"/>
<accession>P0DM54</accession>
<protein>
    <recommendedName>
        <fullName>Bradykinin-potentiating peptide 12b</fullName>
        <shortName>BPP-12b</shortName>
    </recommendedName>
</protein>
<organism>
    <name type="scientific">Bothrops jararaca</name>
    <name type="common">Jararaca</name>
    <name type="synonym">Bothrops jajaraca</name>
    <dbReference type="NCBI Taxonomy" id="8724"/>
    <lineage>
        <taxon>Eukaryota</taxon>
        <taxon>Metazoa</taxon>
        <taxon>Chordata</taxon>
        <taxon>Craniata</taxon>
        <taxon>Vertebrata</taxon>
        <taxon>Euteleostomi</taxon>
        <taxon>Lepidosauria</taxon>
        <taxon>Squamata</taxon>
        <taxon>Bifurcata</taxon>
        <taxon>Unidentata</taxon>
        <taxon>Episquamata</taxon>
        <taxon>Toxicofera</taxon>
        <taxon>Serpentes</taxon>
        <taxon>Colubroidea</taxon>
        <taxon>Viperidae</taxon>
        <taxon>Crotalinae</taxon>
        <taxon>Bothrops</taxon>
    </lineage>
</organism>